<evidence type="ECO:0000255" key="1">
    <source>
        <dbReference type="HAMAP-Rule" id="MF_01454"/>
    </source>
</evidence>
<evidence type="ECO:0000255" key="2">
    <source>
        <dbReference type="PROSITE-ProRule" id="PRU01229"/>
    </source>
</evidence>
<evidence type="ECO:0000255" key="3">
    <source>
        <dbReference type="PROSITE-ProRule" id="PRU01231"/>
    </source>
</evidence>
<comment type="function">
    <text evidence="1">An essential GTPase which binds GTP, GDP and possibly (p)ppGpp with moderate affinity, with high nucleotide exchange rates and a fairly low GTP hydrolysis rate. Plays a role in control of the cell cycle, stress response, ribosome biogenesis and in those bacteria that undergo differentiation, in morphogenesis control.</text>
</comment>
<comment type="cofactor">
    <cofactor evidence="1">
        <name>Mg(2+)</name>
        <dbReference type="ChEBI" id="CHEBI:18420"/>
    </cofactor>
</comment>
<comment type="subunit">
    <text evidence="1">Monomer.</text>
</comment>
<comment type="subcellular location">
    <subcellularLocation>
        <location evidence="1">Cytoplasm</location>
    </subcellularLocation>
</comment>
<comment type="similarity">
    <text evidence="1">Belongs to the TRAFAC class OBG-HflX-like GTPase superfamily. OBG GTPase family.</text>
</comment>
<gene>
    <name evidence="1" type="primary">obg</name>
    <name type="ordered locus">SEQ_1466</name>
</gene>
<name>OBG_STRE4</name>
<sequence>MSMFLDTAKVSVQAGRGGDGMVAFRREKYVPNGGPWGGDGGKGGSVIFKVDEGLRTLIDFRYNRKFKAKSGEKGMTKGMHGRGSEDLIISVPQGTTVRDAETGKVLTDLVEHGQEFVVAKGGRGGRGNIRFATPRNPAPEIAENGEPGEERQLELELKILADVGLVGFPSVGKSTLLSVVSSAKPKIGAYHFTTIVPNLGMVRTKSGESFAMADLPGLIKGASQGVGLGTQFLRHIERTRVILHVIDMSAAEGRDPYEDYVAINKELEAYNLRLMERPQIIVANKMDMPEAKEQLQRFKEQLAAQYDDFEELPIIFPISSLAHQGLDSLLEATAELLAKTDDFLLYDEADLAEDEAYYGFAAEEKAFEISRADDAAWVLSGEKLERLFVMTNLERDESIMKFARQLRGMGVDEALRERGAKDGDIVRIGKFEFEFVD</sequence>
<reference key="1">
    <citation type="journal article" date="2009" name="PLoS Pathog.">
        <title>Genomic evidence for the evolution of Streptococcus equi: host restriction, increased virulence, and genetic exchange with human pathogens.</title>
        <authorList>
            <person name="Holden M.T.G."/>
            <person name="Heather Z."/>
            <person name="Paillot R."/>
            <person name="Steward K.F."/>
            <person name="Webb K."/>
            <person name="Ainslie F."/>
            <person name="Jourdan T."/>
            <person name="Bason N.C."/>
            <person name="Holroyd N.E."/>
            <person name="Mungall K."/>
            <person name="Quail M.A."/>
            <person name="Sanders M."/>
            <person name="Simmonds M."/>
            <person name="Willey D."/>
            <person name="Brooks K."/>
            <person name="Aanensen D.M."/>
            <person name="Spratt B.G."/>
            <person name="Jolley K.A."/>
            <person name="Maiden M.C.J."/>
            <person name="Kehoe M."/>
            <person name="Chanter N."/>
            <person name="Bentley S.D."/>
            <person name="Robinson C."/>
            <person name="Maskell D.J."/>
            <person name="Parkhill J."/>
            <person name="Waller A.S."/>
        </authorList>
    </citation>
    <scope>NUCLEOTIDE SEQUENCE [LARGE SCALE GENOMIC DNA]</scope>
    <source>
        <strain>4047</strain>
    </source>
</reference>
<keyword id="KW-0963">Cytoplasm</keyword>
<keyword id="KW-0342">GTP-binding</keyword>
<keyword id="KW-0378">Hydrolase</keyword>
<keyword id="KW-0460">Magnesium</keyword>
<keyword id="KW-0479">Metal-binding</keyword>
<keyword id="KW-0547">Nucleotide-binding</keyword>
<accession>C0MBS1</accession>
<organism>
    <name type="scientific">Streptococcus equi subsp. equi (strain 4047)</name>
    <dbReference type="NCBI Taxonomy" id="553482"/>
    <lineage>
        <taxon>Bacteria</taxon>
        <taxon>Bacillati</taxon>
        <taxon>Bacillota</taxon>
        <taxon>Bacilli</taxon>
        <taxon>Lactobacillales</taxon>
        <taxon>Streptococcaceae</taxon>
        <taxon>Streptococcus</taxon>
    </lineage>
</organism>
<feature type="chain" id="PRO_0000386292" description="GTPase Obg">
    <location>
        <begin position="1"/>
        <end position="437"/>
    </location>
</feature>
<feature type="domain" description="Obg" evidence="3">
    <location>
        <begin position="2"/>
        <end position="160"/>
    </location>
</feature>
<feature type="domain" description="OBG-type G" evidence="1">
    <location>
        <begin position="161"/>
        <end position="338"/>
    </location>
</feature>
<feature type="domain" description="OCT" evidence="2">
    <location>
        <begin position="359"/>
        <end position="437"/>
    </location>
</feature>
<feature type="binding site" evidence="1">
    <location>
        <begin position="167"/>
        <end position="174"/>
    </location>
    <ligand>
        <name>GTP</name>
        <dbReference type="ChEBI" id="CHEBI:37565"/>
    </ligand>
</feature>
<feature type="binding site" evidence="1">
    <location>
        <position position="174"/>
    </location>
    <ligand>
        <name>Mg(2+)</name>
        <dbReference type="ChEBI" id="CHEBI:18420"/>
    </ligand>
</feature>
<feature type="binding site" evidence="1">
    <location>
        <begin position="192"/>
        <end position="196"/>
    </location>
    <ligand>
        <name>GTP</name>
        <dbReference type="ChEBI" id="CHEBI:37565"/>
    </ligand>
</feature>
<feature type="binding site" evidence="1">
    <location>
        <position position="194"/>
    </location>
    <ligand>
        <name>Mg(2+)</name>
        <dbReference type="ChEBI" id="CHEBI:18420"/>
    </ligand>
</feature>
<feature type="binding site" evidence="1">
    <location>
        <begin position="214"/>
        <end position="217"/>
    </location>
    <ligand>
        <name>GTP</name>
        <dbReference type="ChEBI" id="CHEBI:37565"/>
    </ligand>
</feature>
<feature type="binding site" evidence="1">
    <location>
        <begin position="284"/>
        <end position="287"/>
    </location>
    <ligand>
        <name>GTP</name>
        <dbReference type="ChEBI" id="CHEBI:37565"/>
    </ligand>
</feature>
<feature type="binding site" evidence="1">
    <location>
        <begin position="319"/>
        <end position="321"/>
    </location>
    <ligand>
        <name>GTP</name>
        <dbReference type="ChEBI" id="CHEBI:37565"/>
    </ligand>
</feature>
<dbReference type="EC" id="3.6.5.-" evidence="1"/>
<dbReference type="EMBL" id="FM204883">
    <property type="protein sequence ID" value="CAW94366.1"/>
    <property type="molecule type" value="Genomic_DNA"/>
</dbReference>
<dbReference type="SMR" id="C0MBS1"/>
<dbReference type="KEGG" id="seu:SEQ_1466"/>
<dbReference type="HOGENOM" id="CLU_011747_2_1_9"/>
<dbReference type="OrthoDB" id="9807318at2"/>
<dbReference type="Proteomes" id="UP000001365">
    <property type="component" value="Chromosome"/>
</dbReference>
<dbReference type="GO" id="GO:0005737">
    <property type="term" value="C:cytoplasm"/>
    <property type="evidence" value="ECO:0007669"/>
    <property type="project" value="UniProtKB-SubCell"/>
</dbReference>
<dbReference type="GO" id="GO:0005525">
    <property type="term" value="F:GTP binding"/>
    <property type="evidence" value="ECO:0007669"/>
    <property type="project" value="UniProtKB-UniRule"/>
</dbReference>
<dbReference type="GO" id="GO:0003924">
    <property type="term" value="F:GTPase activity"/>
    <property type="evidence" value="ECO:0007669"/>
    <property type="project" value="UniProtKB-UniRule"/>
</dbReference>
<dbReference type="GO" id="GO:0000287">
    <property type="term" value="F:magnesium ion binding"/>
    <property type="evidence" value="ECO:0007669"/>
    <property type="project" value="InterPro"/>
</dbReference>
<dbReference type="GO" id="GO:0042254">
    <property type="term" value="P:ribosome biogenesis"/>
    <property type="evidence" value="ECO:0007669"/>
    <property type="project" value="UniProtKB-UniRule"/>
</dbReference>
<dbReference type="CDD" id="cd01898">
    <property type="entry name" value="Obg"/>
    <property type="match status" value="1"/>
</dbReference>
<dbReference type="FunFam" id="2.70.210.12:FF:000001">
    <property type="entry name" value="GTPase Obg"/>
    <property type="match status" value="1"/>
</dbReference>
<dbReference type="FunFam" id="3.40.50.300:FF:000515">
    <property type="entry name" value="GTPase Obg"/>
    <property type="match status" value="1"/>
</dbReference>
<dbReference type="Gene3D" id="3.30.300.350">
    <property type="entry name" value="GTP-binding protein OBG, C-terminal domain"/>
    <property type="match status" value="1"/>
</dbReference>
<dbReference type="Gene3D" id="2.70.210.12">
    <property type="entry name" value="GTP1/OBG domain"/>
    <property type="match status" value="1"/>
</dbReference>
<dbReference type="Gene3D" id="3.40.50.300">
    <property type="entry name" value="P-loop containing nucleotide triphosphate hydrolases"/>
    <property type="match status" value="1"/>
</dbReference>
<dbReference type="HAMAP" id="MF_01454">
    <property type="entry name" value="GTPase_Obg"/>
    <property type="match status" value="1"/>
</dbReference>
<dbReference type="InterPro" id="IPR031167">
    <property type="entry name" value="G_OBG"/>
</dbReference>
<dbReference type="InterPro" id="IPR006073">
    <property type="entry name" value="GTP-bd"/>
</dbReference>
<dbReference type="InterPro" id="IPR014100">
    <property type="entry name" value="GTP-bd_Obg/CgtA"/>
</dbReference>
<dbReference type="InterPro" id="IPR036346">
    <property type="entry name" value="GTP-bd_prot_GTP1/OBG_C_sf"/>
</dbReference>
<dbReference type="InterPro" id="IPR006074">
    <property type="entry name" value="GTP1-OBG_CS"/>
</dbReference>
<dbReference type="InterPro" id="IPR006169">
    <property type="entry name" value="GTP1_OBG_dom"/>
</dbReference>
<dbReference type="InterPro" id="IPR036726">
    <property type="entry name" value="GTP1_OBG_dom_sf"/>
</dbReference>
<dbReference type="InterPro" id="IPR045086">
    <property type="entry name" value="OBG_GTPase"/>
</dbReference>
<dbReference type="InterPro" id="IPR015349">
    <property type="entry name" value="OCT_dom"/>
</dbReference>
<dbReference type="InterPro" id="IPR027417">
    <property type="entry name" value="P-loop_NTPase"/>
</dbReference>
<dbReference type="InterPro" id="IPR005225">
    <property type="entry name" value="Small_GTP-bd"/>
</dbReference>
<dbReference type="NCBIfam" id="TIGR02729">
    <property type="entry name" value="Obg_CgtA"/>
    <property type="match status" value="1"/>
</dbReference>
<dbReference type="NCBIfam" id="TIGR03595">
    <property type="entry name" value="Obg_CgtA_exten"/>
    <property type="match status" value="1"/>
</dbReference>
<dbReference type="NCBIfam" id="NF008954">
    <property type="entry name" value="PRK12296.1"/>
    <property type="match status" value="1"/>
</dbReference>
<dbReference type="NCBIfam" id="NF008955">
    <property type="entry name" value="PRK12297.1"/>
    <property type="match status" value="1"/>
</dbReference>
<dbReference type="NCBIfam" id="NF008956">
    <property type="entry name" value="PRK12299.1"/>
    <property type="match status" value="1"/>
</dbReference>
<dbReference type="NCBIfam" id="TIGR00231">
    <property type="entry name" value="small_GTP"/>
    <property type="match status" value="1"/>
</dbReference>
<dbReference type="PANTHER" id="PTHR11702">
    <property type="entry name" value="DEVELOPMENTALLY REGULATED GTP-BINDING PROTEIN-RELATED"/>
    <property type="match status" value="1"/>
</dbReference>
<dbReference type="PANTHER" id="PTHR11702:SF31">
    <property type="entry name" value="MITOCHONDRIAL RIBOSOME-ASSOCIATED GTPASE 2"/>
    <property type="match status" value="1"/>
</dbReference>
<dbReference type="Pfam" id="PF09269">
    <property type="entry name" value="DUF1967"/>
    <property type="match status" value="1"/>
</dbReference>
<dbReference type="Pfam" id="PF01018">
    <property type="entry name" value="GTP1_OBG"/>
    <property type="match status" value="1"/>
</dbReference>
<dbReference type="Pfam" id="PF01926">
    <property type="entry name" value="MMR_HSR1"/>
    <property type="match status" value="1"/>
</dbReference>
<dbReference type="PIRSF" id="PIRSF002401">
    <property type="entry name" value="GTP_bd_Obg/CgtA"/>
    <property type="match status" value="1"/>
</dbReference>
<dbReference type="PRINTS" id="PR00326">
    <property type="entry name" value="GTP1OBG"/>
</dbReference>
<dbReference type="SUPFAM" id="SSF102741">
    <property type="entry name" value="Obg GTP-binding protein C-terminal domain"/>
    <property type="match status" value="1"/>
</dbReference>
<dbReference type="SUPFAM" id="SSF82051">
    <property type="entry name" value="Obg GTP-binding protein N-terminal domain"/>
    <property type="match status" value="1"/>
</dbReference>
<dbReference type="SUPFAM" id="SSF52540">
    <property type="entry name" value="P-loop containing nucleoside triphosphate hydrolases"/>
    <property type="match status" value="1"/>
</dbReference>
<dbReference type="PROSITE" id="PS51710">
    <property type="entry name" value="G_OBG"/>
    <property type="match status" value="1"/>
</dbReference>
<dbReference type="PROSITE" id="PS00905">
    <property type="entry name" value="GTP1_OBG"/>
    <property type="match status" value="1"/>
</dbReference>
<dbReference type="PROSITE" id="PS51883">
    <property type="entry name" value="OBG"/>
    <property type="match status" value="1"/>
</dbReference>
<dbReference type="PROSITE" id="PS51881">
    <property type="entry name" value="OCT"/>
    <property type="match status" value="1"/>
</dbReference>
<protein>
    <recommendedName>
        <fullName evidence="1">GTPase Obg</fullName>
        <ecNumber evidence="1">3.6.5.-</ecNumber>
    </recommendedName>
    <alternativeName>
        <fullName evidence="1">GTP-binding protein Obg</fullName>
    </alternativeName>
</protein>
<proteinExistence type="inferred from homology"/>